<comment type="function">
    <text evidence="1">Catalyzes the reversible transfer of the terminal phosphate group between ATP and AMP. Plays an important role in cellular energy homeostasis and in adenine nucleotide metabolism.</text>
</comment>
<comment type="catalytic activity">
    <reaction evidence="1">
        <text>AMP + ATP = 2 ADP</text>
        <dbReference type="Rhea" id="RHEA:12973"/>
        <dbReference type="ChEBI" id="CHEBI:30616"/>
        <dbReference type="ChEBI" id="CHEBI:456215"/>
        <dbReference type="ChEBI" id="CHEBI:456216"/>
        <dbReference type="EC" id="2.7.4.3"/>
    </reaction>
</comment>
<comment type="pathway">
    <text evidence="1">Purine metabolism; AMP biosynthesis via salvage pathway; AMP from ADP: step 1/1.</text>
</comment>
<comment type="subunit">
    <text evidence="1">Monomer.</text>
</comment>
<comment type="subcellular location">
    <subcellularLocation>
        <location evidence="1">Cytoplasm</location>
    </subcellularLocation>
</comment>
<comment type="domain">
    <text evidence="1">Consists of three domains, a large central CORE domain and two small peripheral domains, NMPbind and LID, which undergo movements during catalysis. The LID domain closes over the site of phosphoryl transfer upon ATP binding. Assembling and dissambling the active center during each catalytic cycle provides an effective means to prevent ATP hydrolysis.</text>
</comment>
<comment type="similarity">
    <text evidence="1">Belongs to the adenylate kinase family.</text>
</comment>
<organism>
    <name type="scientific">Vibrio cholerae serotype O1 (strain ATCC 39541 / Classical Ogawa 395 / O395)</name>
    <dbReference type="NCBI Taxonomy" id="345073"/>
    <lineage>
        <taxon>Bacteria</taxon>
        <taxon>Pseudomonadati</taxon>
        <taxon>Pseudomonadota</taxon>
        <taxon>Gammaproteobacteria</taxon>
        <taxon>Vibrionales</taxon>
        <taxon>Vibrionaceae</taxon>
        <taxon>Vibrio</taxon>
    </lineage>
</organism>
<protein>
    <recommendedName>
        <fullName evidence="1">Adenylate kinase</fullName>
        <shortName evidence="1">AK</shortName>
        <ecNumber evidence="1">2.7.4.3</ecNumber>
    </recommendedName>
    <alternativeName>
        <fullName evidence="1">ATP-AMP transphosphorylase</fullName>
    </alternativeName>
    <alternativeName>
        <fullName evidence="1">ATP:AMP phosphotransferase</fullName>
    </alternativeName>
    <alternativeName>
        <fullName evidence="1">Adenylate monophosphate kinase</fullName>
    </alternativeName>
</protein>
<feature type="chain" id="PRO_1000071803" description="Adenylate kinase">
    <location>
        <begin position="1"/>
        <end position="214"/>
    </location>
</feature>
<feature type="region of interest" description="NMP" evidence="1">
    <location>
        <begin position="30"/>
        <end position="59"/>
    </location>
</feature>
<feature type="region of interest" description="LID" evidence="1">
    <location>
        <begin position="122"/>
        <end position="159"/>
    </location>
</feature>
<feature type="binding site" evidence="1">
    <location>
        <begin position="10"/>
        <end position="15"/>
    </location>
    <ligand>
        <name>ATP</name>
        <dbReference type="ChEBI" id="CHEBI:30616"/>
    </ligand>
</feature>
<feature type="binding site" evidence="1">
    <location>
        <position position="31"/>
    </location>
    <ligand>
        <name>AMP</name>
        <dbReference type="ChEBI" id="CHEBI:456215"/>
    </ligand>
</feature>
<feature type="binding site" evidence="1">
    <location>
        <position position="36"/>
    </location>
    <ligand>
        <name>AMP</name>
        <dbReference type="ChEBI" id="CHEBI:456215"/>
    </ligand>
</feature>
<feature type="binding site" evidence="1">
    <location>
        <begin position="57"/>
        <end position="59"/>
    </location>
    <ligand>
        <name>AMP</name>
        <dbReference type="ChEBI" id="CHEBI:456215"/>
    </ligand>
</feature>
<feature type="binding site" evidence="1">
    <location>
        <begin position="85"/>
        <end position="88"/>
    </location>
    <ligand>
        <name>AMP</name>
        <dbReference type="ChEBI" id="CHEBI:456215"/>
    </ligand>
</feature>
<feature type="binding site" evidence="1">
    <location>
        <position position="92"/>
    </location>
    <ligand>
        <name>AMP</name>
        <dbReference type="ChEBI" id="CHEBI:456215"/>
    </ligand>
</feature>
<feature type="binding site" evidence="1">
    <location>
        <position position="123"/>
    </location>
    <ligand>
        <name>ATP</name>
        <dbReference type="ChEBI" id="CHEBI:30616"/>
    </ligand>
</feature>
<feature type="binding site" evidence="1">
    <location>
        <begin position="132"/>
        <end position="133"/>
    </location>
    <ligand>
        <name>ATP</name>
        <dbReference type="ChEBI" id="CHEBI:30616"/>
    </ligand>
</feature>
<feature type="binding site" evidence="1">
    <location>
        <position position="156"/>
    </location>
    <ligand>
        <name>AMP</name>
        <dbReference type="ChEBI" id="CHEBI:456215"/>
    </ligand>
</feature>
<feature type="binding site" evidence="1">
    <location>
        <position position="167"/>
    </location>
    <ligand>
        <name>AMP</name>
        <dbReference type="ChEBI" id="CHEBI:456215"/>
    </ligand>
</feature>
<feature type="binding site" evidence="1">
    <location>
        <position position="200"/>
    </location>
    <ligand>
        <name>ATP</name>
        <dbReference type="ChEBI" id="CHEBI:30616"/>
    </ligand>
</feature>
<evidence type="ECO:0000255" key="1">
    <source>
        <dbReference type="HAMAP-Rule" id="MF_00235"/>
    </source>
</evidence>
<proteinExistence type="inferred from homology"/>
<keyword id="KW-0067">ATP-binding</keyword>
<keyword id="KW-0963">Cytoplasm</keyword>
<keyword id="KW-0418">Kinase</keyword>
<keyword id="KW-0545">Nucleotide biosynthesis</keyword>
<keyword id="KW-0547">Nucleotide-binding</keyword>
<keyword id="KW-0808">Transferase</keyword>
<name>KAD_VIBC3</name>
<accession>A5F2U0</accession>
<accession>C3LYZ7</accession>
<dbReference type="EC" id="2.7.4.3" evidence="1"/>
<dbReference type="EMBL" id="CP000627">
    <property type="protein sequence ID" value="ABQ19880.1"/>
    <property type="molecule type" value="Genomic_DNA"/>
</dbReference>
<dbReference type="EMBL" id="CP001235">
    <property type="protein sequence ID" value="ACP09013.1"/>
    <property type="molecule type" value="Genomic_DNA"/>
</dbReference>
<dbReference type="RefSeq" id="WP_001220222.1">
    <property type="nucleotide sequence ID" value="NZ_JAACZH010000005.1"/>
</dbReference>
<dbReference type="SMR" id="A5F2U0"/>
<dbReference type="GeneID" id="89514907"/>
<dbReference type="KEGG" id="vco:VC0395_A0507"/>
<dbReference type="KEGG" id="vcr:VC395_1001"/>
<dbReference type="PATRIC" id="fig|345073.21.peg.970"/>
<dbReference type="eggNOG" id="COG0563">
    <property type="taxonomic scope" value="Bacteria"/>
</dbReference>
<dbReference type="HOGENOM" id="CLU_032354_1_2_6"/>
<dbReference type="OrthoDB" id="9805030at2"/>
<dbReference type="UniPathway" id="UPA00588">
    <property type="reaction ID" value="UER00649"/>
</dbReference>
<dbReference type="Proteomes" id="UP000000249">
    <property type="component" value="Chromosome 2"/>
</dbReference>
<dbReference type="GO" id="GO:0005737">
    <property type="term" value="C:cytoplasm"/>
    <property type="evidence" value="ECO:0007669"/>
    <property type="project" value="UniProtKB-SubCell"/>
</dbReference>
<dbReference type="GO" id="GO:0004017">
    <property type="term" value="F:adenylate kinase activity"/>
    <property type="evidence" value="ECO:0007669"/>
    <property type="project" value="UniProtKB-UniRule"/>
</dbReference>
<dbReference type="GO" id="GO:0005524">
    <property type="term" value="F:ATP binding"/>
    <property type="evidence" value="ECO:0007669"/>
    <property type="project" value="UniProtKB-UniRule"/>
</dbReference>
<dbReference type="GO" id="GO:0044209">
    <property type="term" value="P:AMP salvage"/>
    <property type="evidence" value="ECO:0007669"/>
    <property type="project" value="UniProtKB-UniRule"/>
</dbReference>
<dbReference type="CDD" id="cd01428">
    <property type="entry name" value="ADK"/>
    <property type="match status" value="1"/>
</dbReference>
<dbReference type="FunFam" id="3.40.50.300:FF:000106">
    <property type="entry name" value="Adenylate kinase mitochondrial"/>
    <property type="match status" value="1"/>
</dbReference>
<dbReference type="Gene3D" id="3.40.50.300">
    <property type="entry name" value="P-loop containing nucleotide triphosphate hydrolases"/>
    <property type="match status" value="1"/>
</dbReference>
<dbReference type="HAMAP" id="MF_00235">
    <property type="entry name" value="Adenylate_kinase_Adk"/>
    <property type="match status" value="1"/>
</dbReference>
<dbReference type="InterPro" id="IPR006259">
    <property type="entry name" value="Adenyl_kin_sub"/>
</dbReference>
<dbReference type="InterPro" id="IPR000850">
    <property type="entry name" value="Adenylat/UMP-CMP_kin"/>
</dbReference>
<dbReference type="InterPro" id="IPR033690">
    <property type="entry name" value="Adenylat_kinase_CS"/>
</dbReference>
<dbReference type="InterPro" id="IPR007862">
    <property type="entry name" value="Adenylate_kinase_lid-dom"/>
</dbReference>
<dbReference type="InterPro" id="IPR027417">
    <property type="entry name" value="P-loop_NTPase"/>
</dbReference>
<dbReference type="NCBIfam" id="TIGR01351">
    <property type="entry name" value="adk"/>
    <property type="match status" value="1"/>
</dbReference>
<dbReference type="NCBIfam" id="NF001379">
    <property type="entry name" value="PRK00279.1-1"/>
    <property type="match status" value="1"/>
</dbReference>
<dbReference type="NCBIfam" id="NF001380">
    <property type="entry name" value="PRK00279.1-2"/>
    <property type="match status" value="1"/>
</dbReference>
<dbReference type="NCBIfam" id="NF001381">
    <property type="entry name" value="PRK00279.1-3"/>
    <property type="match status" value="1"/>
</dbReference>
<dbReference type="NCBIfam" id="NF011100">
    <property type="entry name" value="PRK14527.1"/>
    <property type="match status" value="1"/>
</dbReference>
<dbReference type="PANTHER" id="PTHR23359">
    <property type="entry name" value="NUCLEOTIDE KINASE"/>
    <property type="match status" value="1"/>
</dbReference>
<dbReference type="Pfam" id="PF00406">
    <property type="entry name" value="ADK"/>
    <property type="match status" value="1"/>
</dbReference>
<dbReference type="Pfam" id="PF05191">
    <property type="entry name" value="ADK_lid"/>
    <property type="match status" value="1"/>
</dbReference>
<dbReference type="PRINTS" id="PR00094">
    <property type="entry name" value="ADENYLTKNASE"/>
</dbReference>
<dbReference type="SUPFAM" id="SSF52540">
    <property type="entry name" value="P-loop containing nucleoside triphosphate hydrolases"/>
    <property type="match status" value="1"/>
</dbReference>
<dbReference type="PROSITE" id="PS00113">
    <property type="entry name" value="ADENYLATE_KINASE"/>
    <property type="match status" value="1"/>
</dbReference>
<reference key="1">
    <citation type="submission" date="2007-03" db="EMBL/GenBank/DDBJ databases">
        <authorList>
            <person name="Heidelberg J."/>
        </authorList>
    </citation>
    <scope>NUCLEOTIDE SEQUENCE [LARGE SCALE GENOMIC DNA]</scope>
    <source>
        <strain>ATCC 39541 / Classical Ogawa 395 / O395</strain>
    </source>
</reference>
<reference key="2">
    <citation type="journal article" date="2008" name="PLoS ONE">
        <title>A recalibrated molecular clock and independent origins for the cholera pandemic clones.</title>
        <authorList>
            <person name="Feng L."/>
            <person name="Reeves P.R."/>
            <person name="Lan R."/>
            <person name="Ren Y."/>
            <person name="Gao C."/>
            <person name="Zhou Z."/>
            <person name="Ren Y."/>
            <person name="Cheng J."/>
            <person name="Wang W."/>
            <person name="Wang J."/>
            <person name="Qian W."/>
            <person name="Li D."/>
            <person name="Wang L."/>
        </authorList>
    </citation>
    <scope>NUCLEOTIDE SEQUENCE [LARGE SCALE GENOMIC DNA]</scope>
    <source>
        <strain>ATCC 39541 / Classical Ogawa 395 / O395</strain>
    </source>
</reference>
<sequence length="214" mass="23277">MRIILLGAPGAGKGTQAQFIMEKFGIPQISTGDMLRAAIKAGTELGKQAKAVIDAGQLVSDDIILGLIKERIAQADCEKGFLLDGFPRTIPQADGLKEMGINVDYVIEFDVADDVIVERMAGRRAHLPSGRTYHVVYNPPKVEGKDDVTGEDLVIREDDKEETVRARLNVYHTQTAPLIEYYGKEAAAGKTQYLKFDGTKQVSEVSADIAKALA</sequence>
<gene>
    <name evidence="1" type="primary">adk</name>
    <name type="ordered locus">VC0395_A0507</name>
    <name type="ordered locus">VC395_1001</name>
</gene>